<dbReference type="EC" id="4.1.99.1" evidence="1"/>
<dbReference type="EMBL" id="CP000800">
    <property type="protein sequence ID" value="ABV17413.1"/>
    <property type="molecule type" value="Genomic_DNA"/>
</dbReference>
<dbReference type="RefSeq" id="WP_001295247.1">
    <property type="nucleotide sequence ID" value="NC_009801.1"/>
</dbReference>
<dbReference type="SMR" id="A7ZTR3"/>
<dbReference type="GeneID" id="75205423"/>
<dbReference type="KEGG" id="ecw:EcE24377A_4217"/>
<dbReference type="HOGENOM" id="CLU_047223_0_0_6"/>
<dbReference type="UniPathway" id="UPA00332">
    <property type="reaction ID" value="UER00452"/>
</dbReference>
<dbReference type="Proteomes" id="UP000001122">
    <property type="component" value="Chromosome"/>
</dbReference>
<dbReference type="GO" id="GO:0009034">
    <property type="term" value="F:tryptophanase activity"/>
    <property type="evidence" value="ECO:0007669"/>
    <property type="project" value="UniProtKB-UniRule"/>
</dbReference>
<dbReference type="FunFam" id="3.40.640.10:FF:000039">
    <property type="entry name" value="Tryptophanase"/>
    <property type="match status" value="1"/>
</dbReference>
<dbReference type="Gene3D" id="3.90.1150.10">
    <property type="entry name" value="Aspartate Aminotransferase, domain 1"/>
    <property type="match status" value="1"/>
</dbReference>
<dbReference type="Gene3D" id="3.40.640.10">
    <property type="entry name" value="Type I PLP-dependent aspartate aminotransferase-like (Major domain)"/>
    <property type="match status" value="1"/>
</dbReference>
<dbReference type="HAMAP" id="MF_00544">
    <property type="entry name" value="Tryptophanase"/>
    <property type="match status" value="1"/>
</dbReference>
<dbReference type="InterPro" id="IPR001597">
    <property type="entry name" value="ArAA_b-elim_lyase/Thr_aldolase"/>
</dbReference>
<dbReference type="InterPro" id="IPR011166">
    <property type="entry name" value="Beta-eliminating_lyase"/>
</dbReference>
<dbReference type="InterPro" id="IPR015424">
    <property type="entry name" value="PyrdxlP-dep_Trfase"/>
</dbReference>
<dbReference type="InterPro" id="IPR015421">
    <property type="entry name" value="PyrdxlP-dep_Trfase_major"/>
</dbReference>
<dbReference type="InterPro" id="IPR015422">
    <property type="entry name" value="PyrdxlP-dep_Trfase_small"/>
</dbReference>
<dbReference type="InterPro" id="IPR013440">
    <property type="entry name" value="TNase"/>
</dbReference>
<dbReference type="InterPro" id="IPR018176">
    <property type="entry name" value="Tryptophanase_CS"/>
</dbReference>
<dbReference type="NCBIfam" id="NF009709">
    <property type="entry name" value="PRK13238.1"/>
    <property type="match status" value="1"/>
</dbReference>
<dbReference type="NCBIfam" id="TIGR02617">
    <property type="entry name" value="tnaA_trp_ase"/>
    <property type="match status" value="1"/>
</dbReference>
<dbReference type="PANTHER" id="PTHR32325">
    <property type="entry name" value="BETA-ELIMINATING LYASE-LIKE PROTEIN-RELATED"/>
    <property type="match status" value="1"/>
</dbReference>
<dbReference type="PANTHER" id="PTHR32325:SF4">
    <property type="entry name" value="TRYPTOPHANASE"/>
    <property type="match status" value="1"/>
</dbReference>
<dbReference type="Pfam" id="PF01212">
    <property type="entry name" value="Beta_elim_lyase"/>
    <property type="match status" value="1"/>
</dbReference>
<dbReference type="PIRSF" id="PIRSF001386">
    <property type="entry name" value="Trpase"/>
    <property type="match status" value="1"/>
</dbReference>
<dbReference type="SUPFAM" id="SSF53383">
    <property type="entry name" value="PLP-dependent transferases"/>
    <property type="match status" value="1"/>
</dbReference>
<dbReference type="PROSITE" id="PS00853">
    <property type="entry name" value="BETA_ELIM_LYASE"/>
    <property type="match status" value="1"/>
</dbReference>
<feature type="chain" id="PRO_1000061072" description="Tryptophanase">
    <location>
        <begin position="1"/>
        <end position="471"/>
    </location>
</feature>
<feature type="modified residue" description="N6-acetyllysine" evidence="1">
    <location>
        <position position="5"/>
    </location>
</feature>
<feature type="modified residue" description="N6-acetyllysine" evidence="1">
    <location>
        <position position="115"/>
    </location>
</feature>
<feature type="modified residue" description="N6-acetyllysine" evidence="1">
    <location>
        <position position="156"/>
    </location>
</feature>
<feature type="modified residue" description="N6-(pyridoxal phosphate)lysine" evidence="1">
    <location>
        <position position="270"/>
    </location>
</feature>
<feature type="modified residue" description="N6-acetyllysine" evidence="1">
    <location>
        <position position="450"/>
    </location>
</feature>
<evidence type="ECO:0000255" key="1">
    <source>
        <dbReference type="HAMAP-Rule" id="MF_00544"/>
    </source>
</evidence>
<sequence>MENFKHLPEPFRIRVIEPVKRTTRAYREEAIIKSGMNPFLLDSEDVFIDLLTDSGTGAVTQSMQAAMMRGDEAYSGSRSYYALAESVKNIFGYQYTIPTHQGRGAEQIYIPVLIKKREQEKGLDRSKMVAFSNYFFDTTQGHSQINGCTVRNVYIKEAFDTGVRYDFKGNFDLEGLERGIEEVGPNNVPYIVATITSNSAGGQPVSLANLKAMYSIAKKYDIPVVMDSARFAENAYFIKQREAEYKDWTIEQITRETYKYADMLAMSAKKDAMVPMGGLLCMKDDSFFDVYTECRTLCVVQEGFPTYGGLEGGAMERLAVGLYDGMNLDWLAYRIAQVQYLVDGLEEIGVVCQQAGGHAAFVDAGKLLPHIPADQFPAQALACELYKVAGIRAVEIGSFLLGRDPKTGKQLPCPAELLRLTIPRATYTQTHMDFIIEAFKHVKENAANIKGLTFTYEPKVLRHFTAKLKEV</sequence>
<keyword id="KW-0007">Acetylation</keyword>
<keyword id="KW-0456">Lyase</keyword>
<keyword id="KW-0663">Pyridoxal phosphate</keyword>
<keyword id="KW-1185">Reference proteome</keyword>
<keyword id="KW-0823">Tryptophan catabolism</keyword>
<accession>A7ZTR3</accession>
<proteinExistence type="inferred from homology"/>
<gene>
    <name evidence="1" type="primary">tnaA</name>
    <name type="ordered locus">EcE24377A_4217</name>
</gene>
<name>TNAA_ECO24</name>
<comment type="catalytic activity">
    <reaction evidence="1">
        <text>L-tryptophan + H2O = indole + pyruvate + NH4(+)</text>
        <dbReference type="Rhea" id="RHEA:19553"/>
        <dbReference type="ChEBI" id="CHEBI:15361"/>
        <dbReference type="ChEBI" id="CHEBI:15377"/>
        <dbReference type="ChEBI" id="CHEBI:16881"/>
        <dbReference type="ChEBI" id="CHEBI:28938"/>
        <dbReference type="ChEBI" id="CHEBI:57912"/>
        <dbReference type="EC" id="4.1.99.1"/>
    </reaction>
</comment>
<comment type="cofactor">
    <cofactor evidence="1">
        <name>pyridoxal 5'-phosphate</name>
        <dbReference type="ChEBI" id="CHEBI:597326"/>
    </cofactor>
</comment>
<comment type="pathway">
    <text evidence="1">Amino-acid degradation; L-tryptophan degradation via pyruvate pathway; indole and pyruvate from L-tryptophan: step 1/1.</text>
</comment>
<comment type="subunit">
    <text evidence="1">Homotetramer.</text>
</comment>
<comment type="similarity">
    <text evidence="1">Belongs to the beta-eliminating lyase family.</text>
</comment>
<reference key="1">
    <citation type="journal article" date="2008" name="J. Bacteriol.">
        <title>The pangenome structure of Escherichia coli: comparative genomic analysis of E. coli commensal and pathogenic isolates.</title>
        <authorList>
            <person name="Rasko D.A."/>
            <person name="Rosovitz M.J."/>
            <person name="Myers G.S.A."/>
            <person name="Mongodin E.F."/>
            <person name="Fricke W.F."/>
            <person name="Gajer P."/>
            <person name="Crabtree J."/>
            <person name="Sebaihia M."/>
            <person name="Thomson N.R."/>
            <person name="Chaudhuri R."/>
            <person name="Henderson I.R."/>
            <person name="Sperandio V."/>
            <person name="Ravel J."/>
        </authorList>
    </citation>
    <scope>NUCLEOTIDE SEQUENCE [LARGE SCALE GENOMIC DNA]</scope>
    <source>
        <strain>E24377A / ETEC</strain>
    </source>
</reference>
<organism>
    <name type="scientific">Escherichia coli O139:H28 (strain E24377A / ETEC)</name>
    <dbReference type="NCBI Taxonomy" id="331111"/>
    <lineage>
        <taxon>Bacteria</taxon>
        <taxon>Pseudomonadati</taxon>
        <taxon>Pseudomonadota</taxon>
        <taxon>Gammaproteobacteria</taxon>
        <taxon>Enterobacterales</taxon>
        <taxon>Enterobacteriaceae</taxon>
        <taxon>Escherichia</taxon>
    </lineage>
</organism>
<protein>
    <recommendedName>
        <fullName evidence="1">Tryptophanase</fullName>
        <ecNumber evidence="1">4.1.99.1</ecNumber>
    </recommendedName>
    <alternativeName>
        <fullName evidence="1">L-tryptophan indole-lyase</fullName>
        <shortName evidence="1">TNase</shortName>
    </alternativeName>
</protein>